<comment type="function">
    <text evidence="1">DNA-dependent RNA polymerase catalyzes the transcription of DNA into RNA using the four ribonucleoside triphosphates as substrates.</text>
</comment>
<comment type="catalytic activity">
    <reaction evidence="1">
        <text>RNA(n) + a ribonucleoside 5'-triphosphate = RNA(n+1) + diphosphate</text>
        <dbReference type="Rhea" id="RHEA:21248"/>
        <dbReference type="Rhea" id="RHEA-COMP:14527"/>
        <dbReference type="Rhea" id="RHEA-COMP:17342"/>
        <dbReference type="ChEBI" id="CHEBI:33019"/>
        <dbReference type="ChEBI" id="CHEBI:61557"/>
        <dbReference type="ChEBI" id="CHEBI:140395"/>
        <dbReference type="EC" id="2.7.7.6"/>
    </reaction>
</comment>
<comment type="subunit">
    <text evidence="1">Homodimer. The RNAP catalytic core consists of 2 alpha, 1 beta, 1 beta' and 1 omega subunit. When a sigma factor is associated with the core the holoenzyme is formed, which can initiate transcription.</text>
</comment>
<comment type="domain">
    <text evidence="1">The N-terminal domain is essential for RNAP assembly and basal transcription, whereas the C-terminal domain is involved in interaction with transcriptional regulators and with upstream promoter elements.</text>
</comment>
<comment type="similarity">
    <text evidence="1">Belongs to the RNA polymerase alpha chain family.</text>
</comment>
<organism>
    <name type="scientific">Paracidovorax citrulli (strain AAC00-1)</name>
    <name type="common">Acidovorax citrulli</name>
    <dbReference type="NCBI Taxonomy" id="397945"/>
    <lineage>
        <taxon>Bacteria</taxon>
        <taxon>Pseudomonadati</taxon>
        <taxon>Pseudomonadota</taxon>
        <taxon>Betaproteobacteria</taxon>
        <taxon>Burkholderiales</taxon>
        <taxon>Comamonadaceae</taxon>
        <taxon>Paracidovorax</taxon>
    </lineage>
</organism>
<proteinExistence type="inferred from homology"/>
<name>RPOA_PARC0</name>
<feature type="chain" id="PRO_0000296773" description="DNA-directed RNA polymerase subunit alpha">
    <location>
        <begin position="1"/>
        <end position="330"/>
    </location>
</feature>
<feature type="region of interest" description="Alpha N-terminal domain (alpha-NTD)" evidence="1">
    <location>
        <begin position="1"/>
        <end position="231"/>
    </location>
</feature>
<feature type="region of interest" description="Alpha C-terminal domain (alpha-CTD)" evidence="1">
    <location>
        <begin position="250"/>
        <end position="330"/>
    </location>
</feature>
<sequence length="330" mass="36247">MQTNLLKPKTINVEQLGHNRAKVALEPFERGYGHTLGNAIRRVLLSSMVGYAATEVTIAGVLHEYSSIDGVQEDVVNILLNLKGVVFKLHNRDEVTLSLRKDGEGVVTARDIQTPHDVEIVNPDHVIAHLSQGGKLDMQIKVEKGRGYVPGNLRRYADESTKSIGRIVLDASFSPVKRVSYTVESARVEQRTDLDKLVVEIETNGAITAEDAVRASAKILVEQLAVFAQLEGGELAAFDTPAGPRGSATFDPILLRPVDELELTVRSANCLKAENIYYIGDLIQRTENELLKTPNLGRKSLNEIKEVLASRGLTLGMKLENWPPAGLDKR</sequence>
<gene>
    <name evidence="1" type="primary">rpoA</name>
    <name type="ordered locus">Aave_0626</name>
</gene>
<reference key="1">
    <citation type="submission" date="2006-12" db="EMBL/GenBank/DDBJ databases">
        <title>Complete sequence of Acidovorax avenae subsp. citrulli AAC00-1.</title>
        <authorList>
            <person name="Copeland A."/>
            <person name="Lucas S."/>
            <person name="Lapidus A."/>
            <person name="Barry K."/>
            <person name="Detter J.C."/>
            <person name="Glavina del Rio T."/>
            <person name="Dalin E."/>
            <person name="Tice H."/>
            <person name="Pitluck S."/>
            <person name="Kiss H."/>
            <person name="Brettin T."/>
            <person name="Bruce D."/>
            <person name="Han C."/>
            <person name="Tapia R."/>
            <person name="Gilna P."/>
            <person name="Schmutz J."/>
            <person name="Larimer F."/>
            <person name="Land M."/>
            <person name="Hauser L."/>
            <person name="Kyrpides N."/>
            <person name="Kim E."/>
            <person name="Stahl D."/>
            <person name="Richardson P."/>
        </authorList>
    </citation>
    <scope>NUCLEOTIDE SEQUENCE [LARGE SCALE GENOMIC DNA]</scope>
    <source>
        <strain>AAC00-1</strain>
    </source>
</reference>
<evidence type="ECO:0000255" key="1">
    <source>
        <dbReference type="HAMAP-Rule" id="MF_00059"/>
    </source>
</evidence>
<accession>A1TJU2</accession>
<dbReference type="EC" id="2.7.7.6" evidence="1"/>
<dbReference type="EMBL" id="CP000512">
    <property type="protein sequence ID" value="ABM31230.1"/>
    <property type="molecule type" value="Genomic_DNA"/>
</dbReference>
<dbReference type="RefSeq" id="WP_011793801.1">
    <property type="nucleotide sequence ID" value="NC_008752.1"/>
</dbReference>
<dbReference type="SMR" id="A1TJU2"/>
<dbReference type="STRING" id="397945.Aave_0626"/>
<dbReference type="GeneID" id="79790340"/>
<dbReference type="KEGG" id="aav:Aave_0626"/>
<dbReference type="eggNOG" id="COG0202">
    <property type="taxonomic scope" value="Bacteria"/>
</dbReference>
<dbReference type="HOGENOM" id="CLU_053084_0_1_4"/>
<dbReference type="OrthoDB" id="9805706at2"/>
<dbReference type="Proteomes" id="UP000002596">
    <property type="component" value="Chromosome"/>
</dbReference>
<dbReference type="GO" id="GO:0005737">
    <property type="term" value="C:cytoplasm"/>
    <property type="evidence" value="ECO:0007669"/>
    <property type="project" value="UniProtKB-ARBA"/>
</dbReference>
<dbReference type="GO" id="GO:0000428">
    <property type="term" value="C:DNA-directed RNA polymerase complex"/>
    <property type="evidence" value="ECO:0007669"/>
    <property type="project" value="UniProtKB-KW"/>
</dbReference>
<dbReference type="GO" id="GO:0003677">
    <property type="term" value="F:DNA binding"/>
    <property type="evidence" value="ECO:0007669"/>
    <property type="project" value="UniProtKB-UniRule"/>
</dbReference>
<dbReference type="GO" id="GO:0003899">
    <property type="term" value="F:DNA-directed RNA polymerase activity"/>
    <property type="evidence" value="ECO:0007669"/>
    <property type="project" value="UniProtKB-UniRule"/>
</dbReference>
<dbReference type="GO" id="GO:0046983">
    <property type="term" value="F:protein dimerization activity"/>
    <property type="evidence" value="ECO:0007669"/>
    <property type="project" value="InterPro"/>
</dbReference>
<dbReference type="GO" id="GO:0006351">
    <property type="term" value="P:DNA-templated transcription"/>
    <property type="evidence" value="ECO:0007669"/>
    <property type="project" value="UniProtKB-UniRule"/>
</dbReference>
<dbReference type="CDD" id="cd06928">
    <property type="entry name" value="RNAP_alpha_NTD"/>
    <property type="match status" value="1"/>
</dbReference>
<dbReference type="FunFam" id="1.10.150.20:FF:000001">
    <property type="entry name" value="DNA-directed RNA polymerase subunit alpha"/>
    <property type="match status" value="1"/>
</dbReference>
<dbReference type="FunFam" id="2.170.120.12:FF:000001">
    <property type="entry name" value="DNA-directed RNA polymerase subunit alpha"/>
    <property type="match status" value="1"/>
</dbReference>
<dbReference type="Gene3D" id="1.10.150.20">
    <property type="entry name" value="5' to 3' exonuclease, C-terminal subdomain"/>
    <property type="match status" value="1"/>
</dbReference>
<dbReference type="Gene3D" id="2.170.120.12">
    <property type="entry name" value="DNA-directed RNA polymerase, insert domain"/>
    <property type="match status" value="1"/>
</dbReference>
<dbReference type="Gene3D" id="3.30.1360.10">
    <property type="entry name" value="RNA polymerase, RBP11-like subunit"/>
    <property type="match status" value="1"/>
</dbReference>
<dbReference type="HAMAP" id="MF_00059">
    <property type="entry name" value="RNApol_bact_RpoA"/>
    <property type="match status" value="1"/>
</dbReference>
<dbReference type="InterPro" id="IPR011262">
    <property type="entry name" value="DNA-dir_RNA_pol_insert"/>
</dbReference>
<dbReference type="InterPro" id="IPR011263">
    <property type="entry name" value="DNA-dir_RNA_pol_RpoA/D/Rpb3"/>
</dbReference>
<dbReference type="InterPro" id="IPR011773">
    <property type="entry name" value="DNA-dir_RpoA"/>
</dbReference>
<dbReference type="InterPro" id="IPR036603">
    <property type="entry name" value="RBP11-like"/>
</dbReference>
<dbReference type="InterPro" id="IPR011260">
    <property type="entry name" value="RNAP_asu_C"/>
</dbReference>
<dbReference type="InterPro" id="IPR036643">
    <property type="entry name" value="RNApol_insert_sf"/>
</dbReference>
<dbReference type="NCBIfam" id="NF003513">
    <property type="entry name" value="PRK05182.1-2"/>
    <property type="match status" value="1"/>
</dbReference>
<dbReference type="NCBIfam" id="NF003519">
    <property type="entry name" value="PRK05182.2-5"/>
    <property type="match status" value="1"/>
</dbReference>
<dbReference type="NCBIfam" id="TIGR02027">
    <property type="entry name" value="rpoA"/>
    <property type="match status" value="1"/>
</dbReference>
<dbReference type="Pfam" id="PF01000">
    <property type="entry name" value="RNA_pol_A_bac"/>
    <property type="match status" value="1"/>
</dbReference>
<dbReference type="Pfam" id="PF03118">
    <property type="entry name" value="RNA_pol_A_CTD"/>
    <property type="match status" value="1"/>
</dbReference>
<dbReference type="Pfam" id="PF01193">
    <property type="entry name" value="RNA_pol_L"/>
    <property type="match status" value="1"/>
</dbReference>
<dbReference type="SMART" id="SM00662">
    <property type="entry name" value="RPOLD"/>
    <property type="match status" value="1"/>
</dbReference>
<dbReference type="SUPFAM" id="SSF47789">
    <property type="entry name" value="C-terminal domain of RNA polymerase alpha subunit"/>
    <property type="match status" value="1"/>
</dbReference>
<dbReference type="SUPFAM" id="SSF56553">
    <property type="entry name" value="Insert subdomain of RNA polymerase alpha subunit"/>
    <property type="match status" value="1"/>
</dbReference>
<dbReference type="SUPFAM" id="SSF55257">
    <property type="entry name" value="RBP11-like subunits of RNA polymerase"/>
    <property type="match status" value="1"/>
</dbReference>
<keyword id="KW-0240">DNA-directed RNA polymerase</keyword>
<keyword id="KW-0548">Nucleotidyltransferase</keyword>
<keyword id="KW-0804">Transcription</keyword>
<keyword id="KW-0808">Transferase</keyword>
<protein>
    <recommendedName>
        <fullName evidence="1">DNA-directed RNA polymerase subunit alpha</fullName>
        <shortName evidence="1">RNAP subunit alpha</shortName>
        <ecNumber evidence="1">2.7.7.6</ecNumber>
    </recommendedName>
    <alternativeName>
        <fullName evidence="1">RNA polymerase subunit alpha</fullName>
    </alternativeName>
    <alternativeName>
        <fullName evidence="1">Transcriptase subunit alpha</fullName>
    </alternativeName>
</protein>